<gene>
    <name evidence="2" type="primary">arcB</name>
    <name type="ordered locus">Lreu_0425</name>
</gene>
<dbReference type="EC" id="2.1.3.3" evidence="2"/>
<dbReference type="EMBL" id="CP000705">
    <property type="protein sequence ID" value="ABQ82694.1"/>
    <property type="molecule type" value="Genomic_DNA"/>
</dbReference>
<dbReference type="SMR" id="A5VIM0"/>
<dbReference type="STRING" id="557436.Lreu_0425"/>
<dbReference type="KEGG" id="lre:Lreu_0425"/>
<dbReference type="PATRIC" id="fig|557436.17.peg.1397"/>
<dbReference type="eggNOG" id="COG0078">
    <property type="taxonomic scope" value="Bacteria"/>
</dbReference>
<dbReference type="HOGENOM" id="CLU_043846_3_1_9"/>
<dbReference type="UniPathway" id="UPA00254">
    <property type="reaction ID" value="UER00365"/>
</dbReference>
<dbReference type="Proteomes" id="UP000001991">
    <property type="component" value="Chromosome"/>
</dbReference>
<dbReference type="GO" id="GO:0005737">
    <property type="term" value="C:cytoplasm"/>
    <property type="evidence" value="ECO:0007669"/>
    <property type="project" value="UniProtKB-SubCell"/>
</dbReference>
<dbReference type="GO" id="GO:0016597">
    <property type="term" value="F:amino acid binding"/>
    <property type="evidence" value="ECO:0007669"/>
    <property type="project" value="InterPro"/>
</dbReference>
<dbReference type="GO" id="GO:0004585">
    <property type="term" value="F:ornithine carbamoyltransferase activity"/>
    <property type="evidence" value="ECO:0007669"/>
    <property type="project" value="UniProtKB-UniRule"/>
</dbReference>
<dbReference type="GO" id="GO:0042450">
    <property type="term" value="P:arginine biosynthetic process via ornithine"/>
    <property type="evidence" value="ECO:0007669"/>
    <property type="project" value="TreeGrafter"/>
</dbReference>
<dbReference type="GO" id="GO:0019547">
    <property type="term" value="P:arginine catabolic process to ornithine"/>
    <property type="evidence" value="ECO:0007669"/>
    <property type="project" value="UniProtKB-UniRule"/>
</dbReference>
<dbReference type="GO" id="GO:0019240">
    <property type="term" value="P:citrulline biosynthetic process"/>
    <property type="evidence" value="ECO:0007669"/>
    <property type="project" value="TreeGrafter"/>
</dbReference>
<dbReference type="FunFam" id="3.40.50.1370:FF:000008">
    <property type="entry name" value="Ornithine carbamoyltransferase"/>
    <property type="match status" value="1"/>
</dbReference>
<dbReference type="Gene3D" id="3.40.50.1370">
    <property type="entry name" value="Aspartate/ornithine carbamoyltransferase"/>
    <property type="match status" value="2"/>
</dbReference>
<dbReference type="HAMAP" id="MF_01109">
    <property type="entry name" value="OTCase"/>
    <property type="match status" value="1"/>
</dbReference>
<dbReference type="InterPro" id="IPR006132">
    <property type="entry name" value="Asp/Orn_carbamoyltranf_P-bd"/>
</dbReference>
<dbReference type="InterPro" id="IPR006130">
    <property type="entry name" value="Asp/Orn_carbamoylTrfase"/>
</dbReference>
<dbReference type="InterPro" id="IPR036901">
    <property type="entry name" value="Asp/Orn_carbamoylTrfase_sf"/>
</dbReference>
<dbReference type="InterPro" id="IPR006131">
    <property type="entry name" value="Asp_carbamoyltransf_Asp/Orn-bd"/>
</dbReference>
<dbReference type="InterPro" id="IPR002292">
    <property type="entry name" value="Orn/put_carbamltrans"/>
</dbReference>
<dbReference type="InterPro" id="IPR024904">
    <property type="entry name" value="OTCase_ArgI"/>
</dbReference>
<dbReference type="NCBIfam" id="TIGR00658">
    <property type="entry name" value="orni_carb_tr"/>
    <property type="match status" value="1"/>
</dbReference>
<dbReference type="NCBIfam" id="NF003286">
    <property type="entry name" value="PRK04284.1"/>
    <property type="match status" value="1"/>
</dbReference>
<dbReference type="PANTHER" id="PTHR45753:SF2">
    <property type="entry name" value="ORNITHINE CARBAMOYLTRANSFERASE"/>
    <property type="match status" value="1"/>
</dbReference>
<dbReference type="PANTHER" id="PTHR45753">
    <property type="entry name" value="ORNITHINE CARBAMOYLTRANSFERASE, MITOCHONDRIAL"/>
    <property type="match status" value="1"/>
</dbReference>
<dbReference type="Pfam" id="PF00185">
    <property type="entry name" value="OTCace"/>
    <property type="match status" value="1"/>
</dbReference>
<dbReference type="Pfam" id="PF02729">
    <property type="entry name" value="OTCace_N"/>
    <property type="match status" value="1"/>
</dbReference>
<dbReference type="PRINTS" id="PR00100">
    <property type="entry name" value="AOTCASE"/>
</dbReference>
<dbReference type="PRINTS" id="PR00102">
    <property type="entry name" value="OTCASE"/>
</dbReference>
<dbReference type="SUPFAM" id="SSF53671">
    <property type="entry name" value="Aspartate/ornithine carbamoyltransferase"/>
    <property type="match status" value="1"/>
</dbReference>
<dbReference type="PROSITE" id="PS00097">
    <property type="entry name" value="CARBAMOYLTRANSFERASE"/>
    <property type="match status" value="1"/>
</dbReference>
<organism>
    <name type="scientific">Limosilactobacillus reuteri (strain DSM 20016)</name>
    <name type="common">Lactobacillus reuteri</name>
    <dbReference type="NCBI Taxonomy" id="557436"/>
    <lineage>
        <taxon>Bacteria</taxon>
        <taxon>Bacillati</taxon>
        <taxon>Bacillota</taxon>
        <taxon>Bacilli</taxon>
        <taxon>Lactobacillales</taxon>
        <taxon>Lactobacillaceae</taxon>
        <taxon>Limosilactobacillus</taxon>
    </lineage>
</organism>
<comment type="function">
    <text evidence="1">Reversibly catalyzes the transfer of the carbamoyl group from carbamoyl phosphate (CP) to the N(epsilon) atom of ornithine (ORN) to produce L-citrulline.</text>
</comment>
<comment type="catalytic activity">
    <reaction evidence="2">
        <text>carbamoyl phosphate + L-ornithine = L-citrulline + phosphate + H(+)</text>
        <dbReference type="Rhea" id="RHEA:19513"/>
        <dbReference type="ChEBI" id="CHEBI:15378"/>
        <dbReference type="ChEBI" id="CHEBI:43474"/>
        <dbReference type="ChEBI" id="CHEBI:46911"/>
        <dbReference type="ChEBI" id="CHEBI:57743"/>
        <dbReference type="ChEBI" id="CHEBI:58228"/>
        <dbReference type="EC" id="2.1.3.3"/>
    </reaction>
</comment>
<comment type="pathway">
    <text evidence="2">Amino-acid degradation; L-arginine degradation via ADI pathway; carbamoyl phosphate from L-arginine: step 2/2.</text>
</comment>
<comment type="subcellular location">
    <subcellularLocation>
        <location evidence="2">Cytoplasm</location>
    </subcellularLocation>
</comment>
<comment type="similarity">
    <text evidence="2">Belongs to the aspartate/ornithine carbamoyltransferase superfamily. OTCase family.</text>
</comment>
<feature type="chain" id="PRO_1000084846" description="Ornithine carbamoyltransferase">
    <location>
        <begin position="1"/>
        <end position="335"/>
    </location>
</feature>
<feature type="binding site" evidence="2">
    <location>
        <begin position="57"/>
        <end position="60"/>
    </location>
    <ligand>
        <name>carbamoyl phosphate</name>
        <dbReference type="ChEBI" id="CHEBI:58228"/>
    </ligand>
</feature>
<feature type="binding site" evidence="2">
    <location>
        <position position="108"/>
    </location>
    <ligand>
        <name>carbamoyl phosphate</name>
        <dbReference type="ChEBI" id="CHEBI:58228"/>
    </ligand>
</feature>
<feature type="binding site" evidence="2">
    <location>
        <begin position="135"/>
        <end position="138"/>
    </location>
    <ligand>
        <name>carbamoyl phosphate</name>
        <dbReference type="ChEBI" id="CHEBI:58228"/>
    </ligand>
</feature>
<feature type="binding site" evidence="2">
    <location>
        <position position="168"/>
    </location>
    <ligand>
        <name>L-ornithine</name>
        <dbReference type="ChEBI" id="CHEBI:46911"/>
    </ligand>
</feature>
<feature type="binding site" evidence="2">
    <location>
        <position position="232"/>
    </location>
    <ligand>
        <name>L-ornithine</name>
        <dbReference type="ChEBI" id="CHEBI:46911"/>
    </ligand>
</feature>
<feature type="binding site" evidence="2">
    <location>
        <begin position="236"/>
        <end position="237"/>
    </location>
    <ligand>
        <name>L-ornithine</name>
        <dbReference type="ChEBI" id="CHEBI:46911"/>
    </ligand>
</feature>
<feature type="binding site" evidence="2">
    <location>
        <begin position="274"/>
        <end position="275"/>
    </location>
    <ligand>
        <name>carbamoyl phosphate</name>
        <dbReference type="ChEBI" id="CHEBI:58228"/>
    </ligand>
</feature>
<feature type="binding site" evidence="2">
    <location>
        <position position="319"/>
    </location>
    <ligand>
        <name>carbamoyl phosphate</name>
        <dbReference type="ChEBI" id="CHEBI:58228"/>
    </ligand>
</feature>
<accession>A5VIM0</accession>
<protein>
    <recommendedName>
        <fullName evidence="2">Ornithine carbamoyltransferase</fullName>
        <shortName evidence="2">OTCase</shortName>
        <ecNumber evidence="2">2.1.3.3</ecNumber>
    </recommendedName>
</protein>
<sequence length="335" mass="37560">MAFNLRNRSFLTLADFNTREMEYMLDLAEDLKKAKYAGYEGKNLKGKNIALIFEKSSTRTRCSFEVGAKDEGAHVTYLGPSGSHIGHKESVKDTARVLGGMFDGIEYRGFSQRNVEILAKYSGVPVWNGLTDEDHPTQVLADFLTAHEVLKKPYKDIKFAFVGDGQDNVSNALMLGAAVMGMEYHVVTPKELEPTKETLDKANEIAAKTGAKIVVTNDIKEGVKGMDVIYADVWVSMGESDDMWEKRINLLKPYQVTMDVMKATENPNVLFEHCLPAFHNLDTEVGKEIEKKFGLKEMEVTDEVFESEHSVVFREAENRMHTIKAVMVATLGEQN</sequence>
<proteinExistence type="inferred from homology"/>
<name>OTC_LIMRD</name>
<keyword id="KW-0056">Arginine metabolism</keyword>
<keyword id="KW-0963">Cytoplasm</keyword>
<keyword id="KW-1185">Reference proteome</keyword>
<keyword id="KW-0808">Transferase</keyword>
<evidence type="ECO:0000250" key="1"/>
<evidence type="ECO:0000255" key="2">
    <source>
        <dbReference type="HAMAP-Rule" id="MF_01109"/>
    </source>
</evidence>
<reference key="1">
    <citation type="journal article" date="2011" name="PLoS Genet.">
        <title>The evolution of host specialization in the vertebrate gut symbiont Lactobacillus reuteri.</title>
        <authorList>
            <person name="Frese S.A."/>
            <person name="Benson A.K."/>
            <person name="Tannock G.W."/>
            <person name="Loach D.M."/>
            <person name="Kim J."/>
            <person name="Zhang M."/>
            <person name="Oh P.L."/>
            <person name="Heng N.C."/>
            <person name="Patil P.B."/>
            <person name="Juge N."/>
            <person name="Mackenzie D.A."/>
            <person name="Pearson B.M."/>
            <person name="Lapidus A."/>
            <person name="Dalin E."/>
            <person name="Tice H."/>
            <person name="Goltsman E."/>
            <person name="Land M."/>
            <person name="Hauser L."/>
            <person name="Ivanova N."/>
            <person name="Kyrpides N.C."/>
            <person name="Walter J."/>
        </authorList>
    </citation>
    <scope>NUCLEOTIDE SEQUENCE [LARGE SCALE GENOMIC DNA]</scope>
    <source>
        <strain>DSM 20016</strain>
    </source>
</reference>